<accession>A6VJT0</accession>
<proteinExistence type="inferred from homology"/>
<name>RL14E_METM7</name>
<organism>
    <name type="scientific">Methanococcus maripaludis (strain C7 / ATCC BAA-1331)</name>
    <dbReference type="NCBI Taxonomy" id="426368"/>
    <lineage>
        <taxon>Archaea</taxon>
        <taxon>Methanobacteriati</taxon>
        <taxon>Methanobacteriota</taxon>
        <taxon>Methanomada group</taxon>
        <taxon>Methanococci</taxon>
        <taxon>Methanococcales</taxon>
        <taxon>Methanococcaceae</taxon>
        <taxon>Methanococcus</taxon>
    </lineage>
</organism>
<protein>
    <recommendedName>
        <fullName evidence="1">Large ribosomal subunit protein eL14</fullName>
    </recommendedName>
    <alternativeName>
        <fullName evidence="2">50S ribosomal protein L14e</fullName>
    </alternativeName>
</protein>
<feature type="chain" id="PRO_1000045820" description="Large ribosomal subunit protein eL14">
    <location>
        <begin position="1"/>
        <end position="77"/>
    </location>
</feature>
<evidence type="ECO:0000255" key="1">
    <source>
        <dbReference type="HAMAP-Rule" id="MF_00721"/>
    </source>
</evidence>
<evidence type="ECO:0000305" key="2"/>
<reference key="1">
    <citation type="submission" date="2007-06" db="EMBL/GenBank/DDBJ databases">
        <title>Complete sequence of Methanococcus maripaludis C7.</title>
        <authorList>
            <consortium name="US DOE Joint Genome Institute"/>
            <person name="Copeland A."/>
            <person name="Lucas S."/>
            <person name="Lapidus A."/>
            <person name="Barry K."/>
            <person name="Glavina del Rio T."/>
            <person name="Dalin E."/>
            <person name="Tice H."/>
            <person name="Pitluck S."/>
            <person name="Clum A."/>
            <person name="Schmutz J."/>
            <person name="Larimer F."/>
            <person name="Land M."/>
            <person name="Hauser L."/>
            <person name="Kyrpides N."/>
            <person name="Anderson I."/>
            <person name="Sieprawska-Lupa M."/>
            <person name="Whitman W.B."/>
            <person name="Richardson P."/>
        </authorList>
    </citation>
    <scope>NUCLEOTIDE SEQUENCE [LARGE SCALE GENOMIC DNA]</scope>
    <source>
        <strain>C7 / ATCC BAA-1331</strain>
    </source>
</reference>
<sequence length="77" mass="8319">MAAIEVGRVCIKTLGREAGNTCVIVEVLDKNFVVIDGGVKRRRCNLKHVEPTDKKVDLEKAASTEEVKLALDAAGLL</sequence>
<keyword id="KW-0687">Ribonucleoprotein</keyword>
<keyword id="KW-0689">Ribosomal protein</keyword>
<gene>
    <name evidence="1" type="primary">rpl14e</name>
    <name type="ordered locus">MmarC7_1648</name>
</gene>
<comment type="similarity">
    <text evidence="1">Belongs to the eukaryotic ribosomal protein eL14 family.</text>
</comment>
<dbReference type="EMBL" id="CP000745">
    <property type="protein sequence ID" value="ABR66706.1"/>
    <property type="molecule type" value="Genomic_DNA"/>
</dbReference>
<dbReference type="SMR" id="A6VJT0"/>
<dbReference type="STRING" id="426368.MmarC7_1648"/>
<dbReference type="KEGG" id="mmz:MmarC7_1648"/>
<dbReference type="eggNOG" id="arCOG04167">
    <property type="taxonomic scope" value="Archaea"/>
</dbReference>
<dbReference type="HOGENOM" id="CLU_183474_0_0_2"/>
<dbReference type="OrthoDB" id="63594at2157"/>
<dbReference type="GO" id="GO:0022625">
    <property type="term" value="C:cytosolic large ribosomal subunit"/>
    <property type="evidence" value="ECO:0007669"/>
    <property type="project" value="TreeGrafter"/>
</dbReference>
<dbReference type="GO" id="GO:0003723">
    <property type="term" value="F:RNA binding"/>
    <property type="evidence" value="ECO:0007669"/>
    <property type="project" value="InterPro"/>
</dbReference>
<dbReference type="GO" id="GO:0003735">
    <property type="term" value="F:structural constituent of ribosome"/>
    <property type="evidence" value="ECO:0007669"/>
    <property type="project" value="InterPro"/>
</dbReference>
<dbReference type="GO" id="GO:0042273">
    <property type="term" value="P:ribosomal large subunit biogenesis"/>
    <property type="evidence" value="ECO:0007669"/>
    <property type="project" value="TreeGrafter"/>
</dbReference>
<dbReference type="GO" id="GO:0006412">
    <property type="term" value="P:translation"/>
    <property type="evidence" value="ECO:0007669"/>
    <property type="project" value="UniProtKB-UniRule"/>
</dbReference>
<dbReference type="CDD" id="cd23702">
    <property type="entry name" value="eL14"/>
    <property type="match status" value="1"/>
</dbReference>
<dbReference type="Gene3D" id="2.30.30.30">
    <property type="match status" value="1"/>
</dbReference>
<dbReference type="HAMAP" id="MF_00721">
    <property type="entry name" value="Ribosomal_eL14"/>
    <property type="match status" value="1"/>
</dbReference>
<dbReference type="InterPro" id="IPR005824">
    <property type="entry name" value="KOW"/>
</dbReference>
<dbReference type="InterPro" id="IPR014722">
    <property type="entry name" value="Rib_uL2_dom2"/>
</dbReference>
<dbReference type="InterPro" id="IPR039660">
    <property type="entry name" value="Ribosomal_eL14"/>
</dbReference>
<dbReference type="InterPro" id="IPR023651">
    <property type="entry name" value="Ribosomal_eL14_arc"/>
</dbReference>
<dbReference type="InterPro" id="IPR008991">
    <property type="entry name" value="Translation_prot_SH3-like_sf"/>
</dbReference>
<dbReference type="NCBIfam" id="NF003320">
    <property type="entry name" value="PRK04333.1"/>
    <property type="match status" value="1"/>
</dbReference>
<dbReference type="PANTHER" id="PTHR11127">
    <property type="entry name" value="60S RIBOSOMAL PROTEIN L14"/>
    <property type="match status" value="1"/>
</dbReference>
<dbReference type="PANTHER" id="PTHR11127:SF2">
    <property type="entry name" value="LARGE RIBOSOMAL SUBUNIT PROTEIN EL14"/>
    <property type="match status" value="1"/>
</dbReference>
<dbReference type="Pfam" id="PF00467">
    <property type="entry name" value="KOW"/>
    <property type="match status" value="1"/>
</dbReference>
<dbReference type="SUPFAM" id="SSF50104">
    <property type="entry name" value="Translation proteins SH3-like domain"/>
    <property type="match status" value="1"/>
</dbReference>